<sequence length="64" mass="7402">MAKLKTRRGAAKRFKATANGFKRKQAFKRHILTKKSAKRIRQLRGCVMVHVSDVASVRRMCPYI</sequence>
<feature type="chain" id="PRO_1000127292" description="Large ribosomal subunit protein bL35">
    <location>
        <begin position="1"/>
        <end position="64"/>
    </location>
</feature>
<proteinExistence type="inferred from homology"/>
<accession>B2HTH5</accession>
<evidence type="ECO:0000255" key="1">
    <source>
        <dbReference type="HAMAP-Rule" id="MF_00514"/>
    </source>
</evidence>
<evidence type="ECO:0000305" key="2"/>
<dbReference type="EMBL" id="CP000863">
    <property type="protein sequence ID" value="ACC55912.1"/>
    <property type="molecule type" value="Genomic_DNA"/>
</dbReference>
<dbReference type="RefSeq" id="WP_001096359.1">
    <property type="nucleotide sequence ID" value="NZ_CP031380.1"/>
</dbReference>
<dbReference type="SMR" id="B2HTH5"/>
<dbReference type="GeneID" id="92892575"/>
<dbReference type="KEGG" id="abc:ACICU_00600"/>
<dbReference type="HOGENOM" id="CLU_169643_1_1_6"/>
<dbReference type="Proteomes" id="UP000008839">
    <property type="component" value="Chromosome"/>
</dbReference>
<dbReference type="GO" id="GO:0022625">
    <property type="term" value="C:cytosolic large ribosomal subunit"/>
    <property type="evidence" value="ECO:0007669"/>
    <property type="project" value="TreeGrafter"/>
</dbReference>
<dbReference type="GO" id="GO:0003735">
    <property type="term" value="F:structural constituent of ribosome"/>
    <property type="evidence" value="ECO:0007669"/>
    <property type="project" value="InterPro"/>
</dbReference>
<dbReference type="GO" id="GO:0006412">
    <property type="term" value="P:translation"/>
    <property type="evidence" value="ECO:0007669"/>
    <property type="project" value="UniProtKB-UniRule"/>
</dbReference>
<dbReference type="FunFam" id="4.10.410.60:FF:000001">
    <property type="entry name" value="50S ribosomal protein L35"/>
    <property type="match status" value="1"/>
</dbReference>
<dbReference type="Gene3D" id="4.10.410.60">
    <property type="match status" value="1"/>
</dbReference>
<dbReference type="HAMAP" id="MF_00514">
    <property type="entry name" value="Ribosomal_bL35"/>
    <property type="match status" value="1"/>
</dbReference>
<dbReference type="InterPro" id="IPR001706">
    <property type="entry name" value="Ribosomal_bL35"/>
</dbReference>
<dbReference type="InterPro" id="IPR021137">
    <property type="entry name" value="Ribosomal_bL35-like"/>
</dbReference>
<dbReference type="InterPro" id="IPR018265">
    <property type="entry name" value="Ribosomal_bL35_CS"/>
</dbReference>
<dbReference type="InterPro" id="IPR037229">
    <property type="entry name" value="Ribosomal_bL35_sf"/>
</dbReference>
<dbReference type="NCBIfam" id="TIGR00001">
    <property type="entry name" value="rpmI_bact"/>
    <property type="match status" value="1"/>
</dbReference>
<dbReference type="PANTHER" id="PTHR33343">
    <property type="entry name" value="54S RIBOSOMAL PROTEIN BL35M"/>
    <property type="match status" value="1"/>
</dbReference>
<dbReference type="PANTHER" id="PTHR33343:SF1">
    <property type="entry name" value="LARGE RIBOSOMAL SUBUNIT PROTEIN BL35M"/>
    <property type="match status" value="1"/>
</dbReference>
<dbReference type="Pfam" id="PF01632">
    <property type="entry name" value="Ribosomal_L35p"/>
    <property type="match status" value="1"/>
</dbReference>
<dbReference type="PRINTS" id="PR00064">
    <property type="entry name" value="RIBOSOMALL35"/>
</dbReference>
<dbReference type="SUPFAM" id="SSF143034">
    <property type="entry name" value="L35p-like"/>
    <property type="match status" value="1"/>
</dbReference>
<dbReference type="PROSITE" id="PS00936">
    <property type="entry name" value="RIBOSOMAL_L35"/>
    <property type="match status" value="1"/>
</dbReference>
<protein>
    <recommendedName>
        <fullName evidence="1">Large ribosomal subunit protein bL35</fullName>
    </recommendedName>
    <alternativeName>
        <fullName evidence="2">50S ribosomal protein L35</fullName>
    </alternativeName>
</protein>
<reference key="1">
    <citation type="journal article" date="2008" name="Antimicrob. Agents Chemother.">
        <title>Whole-genome pyrosequencing of an epidemic multidrug-resistant Acinetobacter baumannii strain belonging to the European clone II group.</title>
        <authorList>
            <person name="Iacono M."/>
            <person name="Villa L."/>
            <person name="Fortini D."/>
            <person name="Bordoni R."/>
            <person name="Imperi F."/>
            <person name="Bonnal R.J."/>
            <person name="Sicheritz-Ponten T."/>
            <person name="De Bellis G."/>
            <person name="Visca P."/>
            <person name="Cassone A."/>
            <person name="Carattoli A."/>
        </authorList>
    </citation>
    <scope>NUCLEOTIDE SEQUENCE [LARGE SCALE GENOMIC DNA]</scope>
    <source>
        <strain>ACICU</strain>
    </source>
</reference>
<comment type="similarity">
    <text evidence="1">Belongs to the bacterial ribosomal protein bL35 family.</text>
</comment>
<name>RL35_ACIBC</name>
<organism>
    <name type="scientific">Acinetobacter baumannii (strain ACICU)</name>
    <dbReference type="NCBI Taxonomy" id="405416"/>
    <lineage>
        <taxon>Bacteria</taxon>
        <taxon>Pseudomonadati</taxon>
        <taxon>Pseudomonadota</taxon>
        <taxon>Gammaproteobacteria</taxon>
        <taxon>Moraxellales</taxon>
        <taxon>Moraxellaceae</taxon>
        <taxon>Acinetobacter</taxon>
        <taxon>Acinetobacter calcoaceticus/baumannii complex</taxon>
    </lineage>
</organism>
<keyword id="KW-0687">Ribonucleoprotein</keyword>
<keyword id="KW-0689">Ribosomal protein</keyword>
<gene>
    <name evidence="1" type="primary">rpmI</name>
    <name type="ordered locus">ACICU_00600</name>
</gene>